<evidence type="ECO:0000250" key="1"/>
<evidence type="ECO:0000255" key="2"/>
<evidence type="ECO:0000256" key="3">
    <source>
        <dbReference type="SAM" id="MobiDB-lite"/>
    </source>
</evidence>
<evidence type="ECO:0000305" key="4"/>
<sequence length="650" mass="71722">MRGIALFVAAVSLIVEGTAESSICSDFGNEFCRNAECEVVPGAEDDFVCKCPRDNMYFNAAEKQCEYKDTCKTRECSYGRCVESNPSKASCVCEASDDLTLQCKIKNDYATDCRNRGGTAKLRTDGFIGATCDCGEWGAMNMTTRNCVPTTCLRPDLTCKDLCEKNLLQRDSRCCQGWNTANCSAAPPADSYCSPGSPKGPDGQCINACKTKEAGFVCKHGCRSTGKAYECTCPSGSTVAEDGITCKSISHTVSCTAEQKQTCRPTEDCRVHKGTVLCECPWNQHLVGDTCISDCVDKKCHEEFMDCGVYMNRQSCYCPWKSRKPGPNVNINECLLNEYYYTVSFTPNISFDSDHCKWYEDRVLEAIRTSIGKEVFKVEILNCTQDIKARLIAEKPLSKHVLRKLQACEHPIGEWCMMYPKLLIKKNSATEIEEENLCDSLLKDQEAAYKGQNKCVKVDNLFWFQCADGYTTTYEMTRGRLRRSVCKAGVSCNENEQSECADKGQIFVYENGKANCQCPPDTKPGEIGCIERTTCNPKEIQECQDKKLECVYKNHKAECECPDDHECYREPAKDSCSEEDNGKCQSSGQRCVIENGKAVCKEKSEATTAATTTTKAKDKDPDPGKSSAAAVSATGLLLLLAATSVTAASL</sequence>
<dbReference type="EMBL" id="M29321">
    <property type="protein sequence ID" value="AAA30098.1"/>
    <property type="molecule type" value="mRNA"/>
</dbReference>
<dbReference type="PIR" id="A34498">
    <property type="entry name" value="A34498"/>
</dbReference>
<dbReference type="VEuPathDB" id="VectorBase:LOC119171703"/>
<dbReference type="OrthoDB" id="6493639at2759"/>
<dbReference type="GO" id="GO:0005886">
    <property type="term" value="C:plasma membrane"/>
    <property type="evidence" value="ECO:0007669"/>
    <property type="project" value="UniProtKB-SubCell"/>
</dbReference>
<dbReference type="GO" id="GO:0098552">
    <property type="term" value="C:side of membrane"/>
    <property type="evidence" value="ECO:0007669"/>
    <property type="project" value="UniProtKB-KW"/>
</dbReference>
<dbReference type="Gene3D" id="2.10.25.10">
    <property type="entry name" value="Laminin"/>
    <property type="match status" value="1"/>
</dbReference>
<dbReference type="InterPro" id="IPR000742">
    <property type="entry name" value="EGF-like_dom"/>
</dbReference>
<dbReference type="SMART" id="SM00181">
    <property type="entry name" value="EGF"/>
    <property type="match status" value="4"/>
</dbReference>
<protein>
    <recommendedName>
        <fullName>Glycoprotein antigen BM86</fullName>
    </recommendedName>
    <alternativeName>
        <fullName>Protective antigen</fullName>
    </alternativeName>
</protein>
<accession>P20736</accession>
<feature type="signal peptide">
    <location>
        <begin position="1"/>
        <end position="19"/>
    </location>
</feature>
<feature type="chain" id="PRO_0000007486" description="Glycoprotein antigen BM86">
    <location>
        <begin position="20"/>
        <end position="627"/>
    </location>
</feature>
<feature type="propeptide" id="PRO_0000007487" description="Removed in mature form" evidence="1">
    <location>
        <begin position="628"/>
        <end position="650"/>
    </location>
</feature>
<feature type="domain" description="EGF-like 1">
    <location>
        <begin position="20"/>
        <end position="66"/>
    </location>
</feature>
<feature type="domain" description="EGF-like 2">
    <location>
        <begin position="67"/>
        <end position="104"/>
    </location>
</feature>
<feature type="domain" description="EGF-like 3">
    <location>
        <begin position="205"/>
        <end position="247"/>
    </location>
</feature>
<feature type="domain" description="EGF-like 4">
    <location>
        <begin position="251"/>
        <end position="292"/>
    </location>
</feature>
<feature type="domain" description="EGF-like 5">
    <location>
        <begin position="291"/>
        <end position="335"/>
    </location>
</feature>
<feature type="domain" description="EGF-like 6">
    <location>
        <begin position="482"/>
        <end position="530"/>
    </location>
</feature>
<feature type="domain" description="EGF-like 7">
    <location>
        <begin position="531"/>
        <end position="568"/>
    </location>
</feature>
<feature type="region of interest" description="Disordered" evidence="3">
    <location>
        <begin position="603"/>
        <end position="628"/>
    </location>
</feature>
<feature type="lipid moiety-binding region" description="GPI-anchor amidated serine" evidence="1">
    <location>
        <position position="627"/>
    </location>
</feature>
<feature type="glycosylation site" description="N-linked (GlcNAc...) asparagine" evidence="2">
    <location>
        <position position="141"/>
    </location>
</feature>
<feature type="glycosylation site" description="N-linked (GlcNAc...) asparagine" evidence="2">
    <location>
        <position position="182"/>
    </location>
</feature>
<feature type="glycosylation site" description="N-linked (GlcNAc...) asparagine" evidence="2">
    <location>
        <position position="348"/>
    </location>
</feature>
<feature type="glycosylation site" description="N-linked (GlcNAc...) asparagine" evidence="2">
    <location>
        <position position="382"/>
    </location>
</feature>
<feature type="disulfide bond" evidence="1">
    <location>
        <begin position="24"/>
        <end position="37"/>
    </location>
</feature>
<feature type="disulfide bond" evidence="1">
    <location>
        <begin position="32"/>
        <end position="49"/>
    </location>
</feature>
<feature type="disulfide bond" evidence="1">
    <location>
        <begin position="51"/>
        <end position="65"/>
    </location>
</feature>
<feature type="disulfide bond" evidence="1">
    <location>
        <begin position="71"/>
        <end position="81"/>
    </location>
</feature>
<feature type="disulfide bond" evidence="1">
    <location>
        <begin position="76"/>
        <end position="91"/>
    </location>
</feature>
<feature type="disulfide bond" evidence="1">
    <location>
        <begin position="93"/>
        <end position="103"/>
    </location>
</feature>
<feature type="disulfide bond" evidence="1">
    <location>
        <begin position="209"/>
        <end position="222"/>
    </location>
</feature>
<feature type="disulfide bond" evidence="1">
    <location>
        <begin position="218"/>
        <end position="231"/>
    </location>
</feature>
<feature type="disulfide bond" evidence="1">
    <location>
        <begin position="233"/>
        <end position="246"/>
    </location>
</feature>
<feature type="disulfide bond" evidence="1">
    <location>
        <begin position="255"/>
        <end position="269"/>
    </location>
</feature>
<feature type="disulfide bond" evidence="1">
    <location>
        <begin position="263"/>
        <end position="278"/>
    </location>
</feature>
<feature type="disulfide bond" evidence="1">
    <location>
        <begin position="280"/>
        <end position="291"/>
    </location>
</feature>
<feature type="disulfide bond" evidence="1">
    <location>
        <begin position="295"/>
        <end position="307"/>
    </location>
</feature>
<feature type="disulfide bond" evidence="1">
    <location>
        <begin position="300"/>
        <end position="316"/>
    </location>
</feature>
<feature type="disulfide bond" evidence="1">
    <location>
        <begin position="318"/>
        <end position="334"/>
    </location>
</feature>
<feature type="disulfide bond" evidence="1">
    <location>
        <begin position="486"/>
        <end position="500"/>
    </location>
</feature>
<feature type="disulfide bond" evidence="1">
    <location>
        <begin position="492"/>
        <end position="516"/>
    </location>
</feature>
<feature type="disulfide bond" evidence="1">
    <location>
        <begin position="518"/>
        <end position="529"/>
    </location>
</feature>
<feature type="disulfide bond" evidence="1">
    <location>
        <begin position="535"/>
        <end position="550"/>
    </location>
</feature>
<feature type="disulfide bond" evidence="1">
    <location>
        <begin position="543"/>
        <end position="559"/>
    </location>
</feature>
<feature type="disulfide bond" evidence="1">
    <location>
        <begin position="561"/>
        <end position="567"/>
    </location>
</feature>
<feature type="sequence variant">
    <original>SGS</original>
    <variation>RAF</variation>
    <location>
        <begin position="235"/>
        <end position="237"/>
    </location>
</feature>
<feature type="sequence variant">
    <original>F</original>
    <variation>C</variation>
    <location>
        <position position="507"/>
    </location>
</feature>
<comment type="subcellular location">
    <subcellularLocation>
        <location evidence="4">Cell membrane</location>
        <topology evidence="4">Lipid-anchor</topology>
        <topology evidence="4">GPI-anchor</topology>
    </subcellularLocation>
</comment>
<keyword id="KW-1003">Cell membrane</keyword>
<keyword id="KW-0903">Direct protein sequencing</keyword>
<keyword id="KW-1015">Disulfide bond</keyword>
<keyword id="KW-0245">EGF-like domain</keyword>
<keyword id="KW-0325">Glycoprotein</keyword>
<keyword id="KW-0336">GPI-anchor</keyword>
<keyword id="KW-0449">Lipoprotein</keyword>
<keyword id="KW-0472">Membrane</keyword>
<keyword id="KW-0677">Repeat</keyword>
<keyword id="KW-0732">Signal</keyword>
<proteinExistence type="evidence at protein level"/>
<organism>
    <name type="scientific">Rhipicephalus microplus</name>
    <name type="common">Cattle tick</name>
    <name type="synonym">Boophilus microplus</name>
    <dbReference type="NCBI Taxonomy" id="6941"/>
    <lineage>
        <taxon>Eukaryota</taxon>
        <taxon>Metazoa</taxon>
        <taxon>Ecdysozoa</taxon>
        <taxon>Arthropoda</taxon>
        <taxon>Chelicerata</taxon>
        <taxon>Arachnida</taxon>
        <taxon>Acari</taxon>
        <taxon>Parasitiformes</taxon>
        <taxon>Ixodida</taxon>
        <taxon>Ixodoidea</taxon>
        <taxon>Ixodidae</taxon>
        <taxon>Rhipicephalinae</taxon>
        <taxon>Rhipicephalus</taxon>
        <taxon>Boophilus</taxon>
    </lineage>
</organism>
<name>BM86_RHIMP</name>
<reference key="1">
    <citation type="journal article" date="1989" name="Proc. Natl. Acad. Sci. U.S.A.">
        <title>Cloning and expression of a protective antigen from the cattle tick Boophilus microplus.</title>
        <authorList>
            <person name="Rand K.N."/>
            <person name="Moore T."/>
            <person name="Sriskantha A."/>
            <person name="Spring K."/>
            <person name="Tellam R.L."/>
            <person name="Willadsen P."/>
            <person name="Cobon G.S."/>
        </authorList>
    </citation>
    <scope>NUCLEOTIDE SEQUENCE [MRNA]</scope>
    <scope>PARTIAL PROTEIN SEQUENCE</scope>
    <source>
        <tissue>Gut</tissue>
    </source>
</reference>
<reference key="2">
    <citation type="journal article" date="1989" name="J. Immunol.">
        <title>Immunologic control of a parasitic arthropod. Identification of a protective antigen from Boophilus microplus.</title>
        <authorList>
            <person name="Willadsen P."/>
            <person name="Riding G.A."/>
            <person name="McKenna R.V."/>
            <person name="Kemp D.H."/>
            <person name="Tellam R.L."/>
            <person name="Nielsen J.N."/>
            <person name="Lahnstein J."/>
            <person name="Cobon G.S."/>
            <person name="Gough J.M."/>
        </authorList>
    </citation>
    <scope>PARTIAL PROTEIN SEQUENCE</scope>
</reference>